<accession>A0A7H0DNB4</accession>
<name>PG142_MONPV</name>
<organismHost>
    <name type="scientific">Cynomys gunnisoni</name>
    <name type="common">Gunnison's prairie dog</name>
    <name type="synonym">Spermophilus gunnisoni</name>
    <dbReference type="NCBI Taxonomy" id="45479"/>
</organismHost>
<organismHost>
    <name type="scientific">Cynomys leucurus</name>
    <name type="common">White-tailed prairie dog</name>
    <dbReference type="NCBI Taxonomy" id="99825"/>
</organismHost>
<organismHost>
    <name type="scientific">Cynomys ludovicianus</name>
    <name type="common">Black-tailed prairie dog</name>
    <dbReference type="NCBI Taxonomy" id="45480"/>
</organismHost>
<organismHost>
    <name type="scientific">Cynomys mexicanus</name>
    <name type="common">Mexican prairie dog</name>
    <dbReference type="NCBI Taxonomy" id="99826"/>
</organismHost>
<organismHost>
    <name type="scientific">Cynomys parvidens</name>
    <name type="common">Utah prairie dog</name>
    <dbReference type="NCBI Taxonomy" id="99827"/>
</organismHost>
<organismHost>
    <name type="scientific">Gliridae</name>
    <name type="common">dormice</name>
    <dbReference type="NCBI Taxonomy" id="30650"/>
</organismHost>
<organismHost>
    <name type="scientific">Heliosciurus ruwenzorii</name>
    <name type="common">Ruwenzori sun squirrel</name>
    <dbReference type="NCBI Taxonomy" id="226685"/>
</organismHost>
<organismHost>
    <name type="scientific">Homo sapiens</name>
    <name type="common">Human</name>
    <dbReference type="NCBI Taxonomy" id="9606"/>
</organismHost>
<organismHost>
    <name type="scientific">Mus musculus</name>
    <name type="common">Mouse</name>
    <dbReference type="NCBI Taxonomy" id="10090"/>
</organismHost>
<keyword id="KW-0067">ATP-binding</keyword>
<keyword id="KW-0238">DNA-binding</keyword>
<keyword id="KW-0347">Helicase</keyword>
<keyword id="KW-1035">Host cytoplasm</keyword>
<keyword id="KW-0378">Hydrolase</keyword>
<keyword id="KW-0426">Late protein</keyword>
<keyword id="KW-0547">Nucleotide-binding</keyword>
<keyword id="KW-0597">Phosphoprotein</keyword>
<keyword id="KW-1185">Reference proteome</keyword>
<keyword id="KW-0804">Transcription</keyword>
<keyword id="KW-0805">Transcription regulation</keyword>
<keyword id="KW-0806">Transcription termination</keyword>
<keyword id="KW-0946">Virion</keyword>
<comment type="function">
    <text evidence="1">Late protein which is a part of a large complex required for early virion morphogenesis. This complex participates in the formation of virosomes and the incorporation of virosomal contents into nascent immature virions. Required for the stability and kinase activity of OPG054.</text>
</comment>
<comment type="subunit">
    <text evidence="1">Part of a complex composed of the kinase OPG054, OPG092, OPG100, OPG114, OPG115, OPG142 and OPG157.</text>
</comment>
<comment type="subcellular location">
    <subcellularLocation>
        <location evidence="1">Host cytoplasm</location>
    </subcellularLocation>
    <subcellularLocation>
        <location evidence="1">Virion</location>
    </subcellularLocation>
    <text evidence="1">Localizes in cytoplasmic virus factories and present in the virion core.</text>
</comment>
<comment type="similarity">
    <text evidence="2">Belongs to the orthopoxvirus OPG142 family.</text>
</comment>
<reference key="1">
    <citation type="journal article" date="2022" name="J. Infect. Dis.">
        <title>Exportation of Monkeypox virus from the African continent.</title>
        <authorList>
            <person name="Mauldin M.R."/>
            <person name="McCollum A.M."/>
            <person name="Nakazawa Y.J."/>
            <person name="Mandra A."/>
            <person name="Whitehouse E.R."/>
            <person name="Davidson W."/>
            <person name="Zhao H."/>
            <person name="Gao J."/>
            <person name="Li Y."/>
            <person name="Doty J."/>
            <person name="Yinka-Ogunleye A."/>
            <person name="Akinpelu A."/>
            <person name="Aruna O."/>
            <person name="Naidoo D."/>
            <person name="Lewandowski K."/>
            <person name="Afrough B."/>
            <person name="Graham V."/>
            <person name="Aarons E."/>
            <person name="Hewson R."/>
            <person name="Vipond R."/>
            <person name="Dunning J."/>
            <person name="Chand M."/>
            <person name="Brown C."/>
            <person name="Cohen-Gihon I."/>
            <person name="Erez N."/>
            <person name="Shifman O."/>
            <person name="Israeli O."/>
            <person name="Sharon M."/>
            <person name="Schwartz E."/>
            <person name="Beth-Din A."/>
            <person name="Zvi A."/>
            <person name="Mak T.M."/>
            <person name="Ng Y.K."/>
            <person name="Cui L."/>
            <person name="Lin R.T.P."/>
            <person name="Olson V.A."/>
            <person name="Brooks T."/>
            <person name="Paran N."/>
            <person name="Ihekweazu C."/>
            <person name="Reynolds M.G."/>
        </authorList>
    </citation>
    <scope>NUCLEOTIDE SEQUENCE [LARGE SCALE GENOMIC DNA]</scope>
    <source>
        <strain>MPXV-M5312_HM12_Rivers</strain>
    </source>
</reference>
<feature type="chain" id="PRO_0000457530" description="Core protein OPG142">
    <location>
        <begin position="1"/>
        <end position="94"/>
    </location>
</feature>
<proteinExistence type="inferred from homology"/>
<dbReference type="EMBL" id="KC257461">
    <property type="protein sequence ID" value="AGF37031.1"/>
    <property type="molecule type" value="Genomic_DNA"/>
</dbReference>
<dbReference type="EMBL" id="MT903340">
    <property type="protein sequence ID" value="QNP12997.1"/>
    <property type="molecule type" value="Genomic_DNA"/>
</dbReference>
<dbReference type="RefSeq" id="NP_536553.1">
    <property type="nucleotide sequence ID" value="NC_003310.1"/>
</dbReference>
<dbReference type="RefSeq" id="YP_010377124.1">
    <property type="nucleotide sequence ID" value="NC_063383.1"/>
</dbReference>
<dbReference type="GeneID" id="72551537"/>
<dbReference type="GeneID" id="929000"/>
<dbReference type="KEGG" id="vg:929000"/>
<dbReference type="Proteomes" id="UP000516359">
    <property type="component" value="Genome"/>
</dbReference>
<dbReference type="GO" id="GO:0030430">
    <property type="term" value="C:host cell cytoplasm"/>
    <property type="evidence" value="ECO:0007669"/>
    <property type="project" value="UniProtKB-SubCell"/>
</dbReference>
<dbReference type="GO" id="GO:0044423">
    <property type="term" value="C:virion component"/>
    <property type="evidence" value="ECO:0007669"/>
    <property type="project" value="UniProtKB-KW"/>
</dbReference>
<dbReference type="GO" id="GO:0005524">
    <property type="term" value="F:ATP binding"/>
    <property type="evidence" value="ECO:0007669"/>
    <property type="project" value="UniProtKB-KW"/>
</dbReference>
<dbReference type="GO" id="GO:0003677">
    <property type="term" value="F:DNA binding"/>
    <property type="evidence" value="ECO:0007669"/>
    <property type="project" value="UniProtKB-KW"/>
</dbReference>
<dbReference type="GO" id="GO:0004386">
    <property type="term" value="F:helicase activity"/>
    <property type="evidence" value="ECO:0007669"/>
    <property type="project" value="UniProtKB-KW"/>
</dbReference>
<dbReference type="GO" id="GO:0016787">
    <property type="term" value="F:hydrolase activity"/>
    <property type="evidence" value="ECO:0007669"/>
    <property type="project" value="UniProtKB-KW"/>
</dbReference>
<dbReference type="GO" id="GO:0006353">
    <property type="term" value="P:DNA-templated transcription termination"/>
    <property type="evidence" value="ECO:0007669"/>
    <property type="project" value="UniProtKB-KW"/>
</dbReference>
<dbReference type="InterPro" id="IPR008445">
    <property type="entry name" value="A15"/>
</dbReference>
<dbReference type="Pfam" id="PF05846">
    <property type="entry name" value="Chordopox_A15"/>
    <property type="match status" value="1"/>
</dbReference>
<gene>
    <name type="primary">OPG142</name>
    <name type="ORF">MPXVgp126</name>
</gene>
<evidence type="ECO:0000250" key="1">
    <source>
        <dbReference type="UniProtKB" id="P68718"/>
    </source>
</evidence>
<evidence type="ECO:0000305" key="2"/>
<organism>
    <name type="scientific">Monkeypox virus</name>
    <dbReference type="NCBI Taxonomy" id="10244"/>
    <lineage>
        <taxon>Viruses</taxon>
        <taxon>Varidnaviria</taxon>
        <taxon>Bamfordvirae</taxon>
        <taxon>Nucleocytoviricota</taxon>
        <taxon>Pokkesviricetes</taxon>
        <taxon>Chitovirales</taxon>
        <taxon>Poxviridae</taxon>
        <taxon>Chordopoxvirinae</taxon>
        <taxon>Orthopoxvirus</taxon>
    </lineage>
</organism>
<sequence>MFVDDNSLIIYSTWPSTLSDSSGRVIIMPDNRSFTFKEGFKLDESIKSILLVNPSSIDLLKIRVYKHRIKWMGDIFVLFEQENIPPPFRLVNDK</sequence>
<protein>
    <recommendedName>
        <fullName>Core protein OPG142</fullName>
    </recommendedName>
</protein>